<organism>
    <name type="scientific">Rattus norvegicus</name>
    <name type="common">Rat</name>
    <dbReference type="NCBI Taxonomy" id="10116"/>
    <lineage>
        <taxon>Eukaryota</taxon>
        <taxon>Metazoa</taxon>
        <taxon>Chordata</taxon>
        <taxon>Craniata</taxon>
        <taxon>Vertebrata</taxon>
        <taxon>Euteleostomi</taxon>
        <taxon>Mammalia</taxon>
        <taxon>Eutheria</taxon>
        <taxon>Euarchontoglires</taxon>
        <taxon>Glires</taxon>
        <taxon>Rodentia</taxon>
        <taxon>Myomorpha</taxon>
        <taxon>Muroidea</taxon>
        <taxon>Muridae</taxon>
        <taxon>Murinae</taxon>
        <taxon>Rattus</taxon>
    </lineage>
</organism>
<sequence>MAIQLRVFYLVPLLLASYVQTTPRLEKMKMDCYKDVKGTIYNYEALSLNGKERIPFKQYAGKHVLFVNVATYCGLTIQYPELNALQDDLKQFGLVILGFPCNQFGKQEPGDNTEILPGLKYVRPGKGFLPNFQLFAKGDVNGEKEQEIFTFLKRSCPHPSETVVTSKHTFWEPIKVHDIRWNFEKFLVGPNGVPVMRWFHQAPVSTVKSDILAYLNQFKTI</sequence>
<reference key="1">
    <citation type="journal article" date="1992" name="Biochem. J.">
        <title>Genetic evidence for an androgen-regulated epididymal secretory glutathione peroxidase whose transcript does not contain a selenocysteine codon.</title>
        <authorList>
            <person name="Perry A.C.F."/>
            <person name="Jones R."/>
            <person name="Niang L.S.P."/>
            <person name="Jackson R.M."/>
            <person name="Hall L."/>
        </authorList>
    </citation>
    <scope>NUCLEOTIDE SEQUENCE [MRNA]</scope>
    <source>
        <strain>Wistar</strain>
        <tissue>Epididymis</tissue>
    </source>
</reference>
<feature type="signal peptide" evidence="2">
    <location>
        <begin position="1"/>
        <end position="21"/>
    </location>
</feature>
<feature type="chain" id="PRO_0000013080" description="Epididymal secretory glutathione peroxidase">
    <location>
        <begin position="22"/>
        <end position="221"/>
    </location>
</feature>
<feature type="active site" evidence="1">
    <location>
        <position position="73"/>
    </location>
</feature>
<name>GPX5_RAT</name>
<comment type="function">
    <text>Protects cells and enzymes from oxidative damage, by catalyzing the reduction of hydrogen peroxide, lipid peroxides and organic hydroperoxide, by glutathione. May constitute a glutathione peroxidase-like protective system against peroxide damage in sperm membrane lipids.</text>
</comment>
<comment type="catalytic activity">
    <reaction>
        <text>2 glutathione + H2O2 = glutathione disulfide + 2 H2O</text>
        <dbReference type="Rhea" id="RHEA:16833"/>
        <dbReference type="ChEBI" id="CHEBI:15377"/>
        <dbReference type="ChEBI" id="CHEBI:16240"/>
        <dbReference type="ChEBI" id="CHEBI:57925"/>
        <dbReference type="ChEBI" id="CHEBI:58297"/>
        <dbReference type="EC" id="1.11.1.9"/>
    </reaction>
</comment>
<comment type="subcellular location">
    <subcellularLocation>
        <location>Secreted</location>
    </subcellularLocation>
</comment>
<comment type="tissue specificity">
    <text>Epididymis.</text>
</comment>
<comment type="similarity">
    <text evidence="3">Belongs to the glutathione peroxidase family.</text>
</comment>
<keyword id="KW-0560">Oxidoreductase</keyword>
<keyword id="KW-0575">Peroxidase</keyword>
<keyword id="KW-1185">Reference proteome</keyword>
<keyword id="KW-0964">Secreted</keyword>
<keyword id="KW-0732">Signal</keyword>
<protein>
    <recommendedName>
        <fullName>Epididymal secretory glutathione peroxidase</fullName>
        <ecNumber>1.11.1.9</ecNumber>
    </recommendedName>
    <alternativeName>
        <fullName>Epididymis-specific glutathione peroxidase-like protein</fullName>
        <shortName>EGLP</shortName>
    </alternativeName>
    <alternativeName>
        <fullName>Glutathione peroxidase 5</fullName>
        <shortName>GPx-5</shortName>
        <shortName>GSHPx-5</shortName>
    </alternativeName>
</protein>
<dbReference type="EC" id="1.11.1.9"/>
<dbReference type="EMBL" id="X62404">
    <property type="protein sequence ID" value="CAA44274.1"/>
    <property type="molecule type" value="mRNA"/>
</dbReference>
<dbReference type="PIR" id="S24328">
    <property type="entry name" value="S24328"/>
</dbReference>
<dbReference type="RefSeq" id="NP_001099208.1">
    <property type="nucleotide sequence ID" value="NM_001105738.2"/>
</dbReference>
<dbReference type="SMR" id="P30710"/>
<dbReference type="FunCoup" id="P30710">
    <property type="interactions" value="62"/>
</dbReference>
<dbReference type="STRING" id="10116.ENSRNOP00000068999"/>
<dbReference type="PeroxiBase" id="3735">
    <property type="entry name" value="RnoGPx05"/>
</dbReference>
<dbReference type="PhosphoSitePlus" id="P30710"/>
<dbReference type="GeneID" id="113919"/>
<dbReference type="KEGG" id="rno:113919"/>
<dbReference type="AGR" id="RGD:69227"/>
<dbReference type="CTD" id="2880"/>
<dbReference type="RGD" id="69227">
    <property type="gene designation" value="Gpx5"/>
</dbReference>
<dbReference type="InParanoid" id="P30710"/>
<dbReference type="OrthoDB" id="6138at9989"/>
<dbReference type="PhylomeDB" id="P30710"/>
<dbReference type="Reactome" id="R-RNO-3299685">
    <property type="pathway name" value="Detoxification of Reactive Oxygen Species"/>
</dbReference>
<dbReference type="PRO" id="PR:P30710"/>
<dbReference type="Proteomes" id="UP000002494">
    <property type="component" value="Unplaced"/>
</dbReference>
<dbReference type="GO" id="GO:0005615">
    <property type="term" value="C:extracellular space"/>
    <property type="evidence" value="ECO:0000266"/>
    <property type="project" value="RGD"/>
</dbReference>
<dbReference type="GO" id="GO:0097524">
    <property type="term" value="C:sperm plasma membrane"/>
    <property type="evidence" value="ECO:0000266"/>
    <property type="project" value="RGD"/>
</dbReference>
<dbReference type="GO" id="GO:0004602">
    <property type="term" value="F:glutathione peroxidase activity"/>
    <property type="evidence" value="ECO:0000318"/>
    <property type="project" value="GO_Central"/>
</dbReference>
<dbReference type="GO" id="GO:0034599">
    <property type="term" value="P:cellular response to oxidative stress"/>
    <property type="evidence" value="ECO:0000266"/>
    <property type="project" value="RGD"/>
</dbReference>
<dbReference type="CDD" id="cd00340">
    <property type="entry name" value="GSH_Peroxidase"/>
    <property type="match status" value="1"/>
</dbReference>
<dbReference type="FunFam" id="3.40.30.10:FF:000112">
    <property type="entry name" value="Glutathione peroxidase"/>
    <property type="match status" value="1"/>
</dbReference>
<dbReference type="Gene3D" id="3.40.30.10">
    <property type="entry name" value="Glutaredoxin"/>
    <property type="match status" value="1"/>
</dbReference>
<dbReference type="InterPro" id="IPR000889">
    <property type="entry name" value="Glutathione_peroxidase"/>
</dbReference>
<dbReference type="InterPro" id="IPR029759">
    <property type="entry name" value="GPX_AS"/>
</dbReference>
<dbReference type="InterPro" id="IPR029760">
    <property type="entry name" value="GPX_CS"/>
</dbReference>
<dbReference type="InterPro" id="IPR036249">
    <property type="entry name" value="Thioredoxin-like_sf"/>
</dbReference>
<dbReference type="PANTHER" id="PTHR11592:SF127">
    <property type="entry name" value="EPIDIDYMAL SECRETORY GLUTATHIONE PEROXIDASE"/>
    <property type="match status" value="1"/>
</dbReference>
<dbReference type="PANTHER" id="PTHR11592">
    <property type="entry name" value="GLUTATHIONE PEROXIDASE"/>
    <property type="match status" value="1"/>
</dbReference>
<dbReference type="Pfam" id="PF00255">
    <property type="entry name" value="GSHPx"/>
    <property type="match status" value="1"/>
</dbReference>
<dbReference type="PIRSF" id="PIRSF000303">
    <property type="entry name" value="Glutathion_perox"/>
    <property type="match status" value="1"/>
</dbReference>
<dbReference type="PRINTS" id="PR01011">
    <property type="entry name" value="GLUTPROXDASE"/>
</dbReference>
<dbReference type="SUPFAM" id="SSF52833">
    <property type="entry name" value="Thioredoxin-like"/>
    <property type="match status" value="1"/>
</dbReference>
<dbReference type="PROSITE" id="PS00460">
    <property type="entry name" value="GLUTATHIONE_PEROXID_1"/>
    <property type="match status" value="1"/>
</dbReference>
<dbReference type="PROSITE" id="PS00763">
    <property type="entry name" value="GLUTATHIONE_PEROXID_2"/>
    <property type="match status" value="1"/>
</dbReference>
<dbReference type="PROSITE" id="PS51355">
    <property type="entry name" value="GLUTATHIONE_PEROXID_3"/>
    <property type="match status" value="1"/>
</dbReference>
<evidence type="ECO:0000250" key="1"/>
<evidence type="ECO:0000255" key="2"/>
<evidence type="ECO:0000305" key="3"/>
<gene>
    <name type="primary">Gpx5</name>
</gene>
<proteinExistence type="evidence at transcript level"/>
<accession>P30710</accession>